<reference key="1">
    <citation type="journal article" date="1995" name="Biochem. Mol. Biol. Int.">
        <title>Rev-erb beta 2, a novel isoform of the Rev-erb family of orphan nuclear receptors.</title>
        <authorList>
            <person name="Giambiagi N."/>
            <person name="Cassia R."/>
            <person name="Petropoulos I."/>
            <person name="Part D."/>
            <person name="Cereghini S."/>
            <person name="Zakin M.M."/>
            <person name="Ochoa A."/>
        </authorList>
    </citation>
    <scope>NUCLEOTIDE SEQUENCE [MRNA]</scope>
    <scope>ALTERNATIVE SPLICING</scope>
    <source>
        <strain>Sprague-Dawley</strain>
        <tissue>Brain</tissue>
    </source>
</reference>
<reference key="2">
    <citation type="journal article" date="1994" name="Biochem. Biophys. Res. Commun.">
        <title>Identification of a novel member of the nuclear receptor superfamily which is closely related to Rev-ErbA.</title>
        <authorList>
            <person name="Enmark E."/>
            <person name="Kainu T."/>
            <person name="Pelto-Huikko M."/>
            <person name="Gustafsson J.-A."/>
        </authorList>
    </citation>
    <scope>NUCLEOTIDE SEQUENCE [MRNA] OF 46-578</scope>
    <source>
        <strain>Sprague-Dawley</strain>
        <tissue>Brain</tissue>
    </source>
</reference>
<dbReference type="EMBL" id="X82777">
    <property type="protein sequence ID" value="CAA58021.1"/>
    <property type="molecule type" value="mRNA"/>
</dbReference>
<dbReference type="EMBL" id="X78135">
    <property type="protein sequence ID" value="CAA55014.1"/>
    <property type="molecule type" value="mRNA"/>
</dbReference>
<dbReference type="EMBL" id="U20796">
    <property type="protein sequence ID" value="AAA62508.1"/>
    <property type="molecule type" value="mRNA"/>
</dbReference>
<dbReference type="PIR" id="S52913">
    <property type="entry name" value="S52913"/>
</dbReference>
<dbReference type="RefSeq" id="NP_671743.2">
    <molecule id="Q63504-1"/>
    <property type="nucleotide sequence ID" value="NM_147210.2"/>
</dbReference>
<dbReference type="SMR" id="Q63504"/>
<dbReference type="FunCoup" id="Q63504">
    <property type="interactions" value="1482"/>
</dbReference>
<dbReference type="STRING" id="10116.ENSRNOP00000075553"/>
<dbReference type="PhosphoSitePlus" id="Q63504"/>
<dbReference type="PaxDb" id="10116-ENSRNOP00000065585"/>
<dbReference type="Ensembl" id="ENSRNOT00000081845.2">
    <molecule id="Q63504-1"/>
    <property type="protein sequence ID" value="ENSRNOP00000075553.1"/>
    <property type="gene ID" value="ENSRNOG00000046912.3"/>
</dbReference>
<dbReference type="GeneID" id="259241"/>
<dbReference type="KEGG" id="rno:259241"/>
<dbReference type="AGR" id="RGD:628828"/>
<dbReference type="CTD" id="9975"/>
<dbReference type="RGD" id="628828">
    <property type="gene designation" value="Nr1d2"/>
</dbReference>
<dbReference type="eggNOG" id="KOG4846">
    <property type="taxonomic scope" value="Eukaryota"/>
</dbReference>
<dbReference type="GeneTree" id="ENSGT00940000155168"/>
<dbReference type="HOGENOM" id="CLU_007368_2_4_1"/>
<dbReference type="InParanoid" id="Q63504"/>
<dbReference type="OrthoDB" id="43110at9989"/>
<dbReference type="PhylomeDB" id="Q63504"/>
<dbReference type="Reactome" id="R-RNO-383280">
    <property type="pathway name" value="Nuclear Receptor transcription pathway"/>
</dbReference>
<dbReference type="PRO" id="PR:Q63504"/>
<dbReference type="Proteomes" id="UP000002494">
    <property type="component" value="Chromosome 15"/>
</dbReference>
<dbReference type="Bgee" id="ENSRNOG00000046912">
    <property type="expression patterns" value="Expressed in skeletal muscle tissue and 20 other cell types or tissues"/>
</dbReference>
<dbReference type="ExpressionAtlas" id="Q63504">
    <property type="expression patterns" value="baseline and differential"/>
</dbReference>
<dbReference type="GO" id="GO:0005737">
    <property type="term" value="C:cytoplasm"/>
    <property type="evidence" value="ECO:0000250"/>
    <property type="project" value="UniProtKB"/>
</dbReference>
<dbReference type="GO" id="GO:0005634">
    <property type="term" value="C:nucleus"/>
    <property type="evidence" value="ECO:0000250"/>
    <property type="project" value="UniProtKB"/>
</dbReference>
<dbReference type="GO" id="GO:0000987">
    <property type="term" value="F:cis-regulatory region sequence-specific DNA binding"/>
    <property type="evidence" value="ECO:0000250"/>
    <property type="project" value="UniProtKB"/>
</dbReference>
<dbReference type="GO" id="GO:0003677">
    <property type="term" value="F:DNA binding"/>
    <property type="evidence" value="ECO:0000266"/>
    <property type="project" value="RGD"/>
</dbReference>
<dbReference type="GO" id="GO:0003700">
    <property type="term" value="F:DNA-binding transcription factor activity"/>
    <property type="evidence" value="ECO:0000266"/>
    <property type="project" value="RGD"/>
</dbReference>
<dbReference type="GO" id="GO:0001227">
    <property type="term" value="F:DNA-binding transcription repressor activity, RNA polymerase II-specific"/>
    <property type="evidence" value="ECO:0000266"/>
    <property type="project" value="RGD"/>
</dbReference>
<dbReference type="GO" id="GO:0004879">
    <property type="term" value="F:nuclear receptor activity"/>
    <property type="evidence" value="ECO:0000318"/>
    <property type="project" value="GO_Central"/>
</dbReference>
<dbReference type="GO" id="GO:0000978">
    <property type="term" value="F:RNA polymerase II cis-regulatory region sequence-specific DNA binding"/>
    <property type="evidence" value="ECO:0000250"/>
    <property type="project" value="UniProtKB"/>
</dbReference>
<dbReference type="GO" id="GO:1990837">
    <property type="term" value="F:sequence-specific double-stranded DNA binding"/>
    <property type="evidence" value="ECO:0000266"/>
    <property type="project" value="RGD"/>
</dbReference>
<dbReference type="GO" id="GO:0008270">
    <property type="term" value="F:zinc ion binding"/>
    <property type="evidence" value="ECO:0007669"/>
    <property type="project" value="UniProtKB-KW"/>
</dbReference>
<dbReference type="GO" id="GO:0030154">
    <property type="term" value="P:cell differentiation"/>
    <property type="evidence" value="ECO:0000318"/>
    <property type="project" value="GO_Central"/>
</dbReference>
<dbReference type="GO" id="GO:0048512">
    <property type="term" value="P:circadian behavior"/>
    <property type="evidence" value="ECO:0000250"/>
    <property type="project" value="UniProtKB"/>
</dbReference>
<dbReference type="GO" id="GO:0097009">
    <property type="term" value="P:energy homeostasis"/>
    <property type="evidence" value="ECO:0000250"/>
    <property type="project" value="UniProtKB"/>
</dbReference>
<dbReference type="GO" id="GO:0009755">
    <property type="term" value="P:hormone-mediated signaling pathway"/>
    <property type="evidence" value="ECO:0000318"/>
    <property type="project" value="GO_Central"/>
</dbReference>
<dbReference type="GO" id="GO:0030522">
    <property type="term" value="P:intracellular receptor signaling pathway"/>
    <property type="evidence" value="ECO:0000318"/>
    <property type="project" value="GO_Central"/>
</dbReference>
<dbReference type="GO" id="GO:0055088">
    <property type="term" value="P:lipid homeostasis"/>
    <property type="evidence" value="ECO:0000250"/>
    <property type="project" value="UniProtKB"/>
</dbReference>
<dbReference type="GO" id="GO:0045892">
    <property type="term" value="P:negative regulation of DNA-templated transcription"/>
    <property type="evidence" value="ECO:0000250"/>
    <property type="project" value="UniProtKB"/>
</dbReference>
<dbReference type="GO" id="GO:0050728">
    <property type="term" value="P:negative regulation of inflammatory response"/>
    <property type="evidence" value="ECO:0000266"/>
    <property type="project" value="RGD"/>
</dbReference>
<dbReference type="GO" id="GO:0000122">
    <property type="term" value="P:negative regulation of transcription by RNA polymerase II"/>
    <property type="evidence" value="ECO:0000266"/>
    <property type="project" value="RGD"/>
</dbReference>
<dbReference type="GO" id="GO:0045893">
    <property type="term" value="P:positive regulation of DNA-templated transcription"/>
    <property type="evidence" value="ECO:0000250"/>
    <property type="project" value="UniProtKB"/>
</dbReference>
<dbReference type="GO" id="GO:0045944">
    <property type="term" value="P:positive regulation of transcription by RNA polymerase II"/>
    <property type="evidence" value="ECO:0000318"/>
    <property type="project" value="GO_Central"/>
</dbReference>
<dbReference type="GO" id="GO:0042752">
    <property type="term" value="P:regulation of circadian rhythm"/>
    <property type="evidence" value="ECO:0000250"/>
    <property type="project" value="UniProtKB"/>
</dbReference>
<dbReference type="GO" id="GO:0006355">
    <property type="term" value="P:regulation of DNA-templated transcription"/>
    <property type="evidence" value="ECO:0000266"/>
    <property type="project" value="RGD"/>
</dbReference>
<dbReference type="GO" id="GO:0050727">
    <property type="term" value="P:regulation of inflammatory response"/>
    <property type="evidence" value="ECO:0000250"/>
    <property type="project" value="UniProtKB"/>
</dbReference>
<dbReference type="GO" id="GO:0019216">
    <property type="term" value="P:regulation of lipid metabolic process"/>
    <property type="evidence" value="ECO:0000250"/>
    <property type="project" value="UniProtKB"/>
</dbReference>
<dbReference type="GO" id="GO:2001014">
    <property type="term" value="P:regulation of skeletal muscle cell differentiation"/>
    <property type="evidence" value="ECO:0000250"/>
    <property type="project" value="UniProtKB"/>
</dbReference>
<dbReference type="CDD" id="cd07166">
    <property type="entry name" value="NR_DBD_REV_ERB"/>
    <property type="match status" value="1"/>
</dbReference>
<dbReference type="CDD" id="cd06940">
    <property type="entry name" value="NR_LBD_REV_ERB"/>
    <property type="match status" value="1"/>
</dbReference>
<dbReference type="FunFam" id="1.10.565.10:FF:000016">
    <property type="entry name" value="Nuclear receptor subfamily 1 group D member 2"/>
    <property type="match status" value="1"/>
</dbReference>
<dbReference type="FunFam" id="3.30.50.10:FF:000013">
    <property type="entry name" value="Nuclear receptor subfamily 1 group D member 2"/>
    <property type="match status" value="1"/>
</dbReference>
<dbReference type="Gene3D" id="3.30.50.10">
    <property type="entry name" value="Erythroid Transcription Factor GATA-1, subunit A"/>
    <property type="match status" value="1"/>
</dbReference>
<dbReference type="Gene3D" id="1.10.565.10">
    <property type="entry name" value="Retinoid X Receptor"/>
    <property type="match status" value="1"/>
</dbReference>
<dbReference type="InterPro" id="IPR035500">
    <property type="entry name" value="NHR-like_dom_sf"/>
</dbReference>
<dbReference type="InterPro" id="IPR000536">
    <property type="entry name" value="Nucl_hrmn_rcpt_lig-bd"/>
</dbReference>
<dbReference type="InterPro" id="IPR050234">
    <property type="entry name" value="Nuclear_hormone_rcpt_NR1"/>
</dbReference>
<dbReference type="InterPro" id="IPR001723">
    <property type="entry name" value="Nuclear_hrmn_rcpt"/>
</dbReference>
<dbReference type="InterPro" id="IPR001628">
    <property type="entry name" value="Znf_hrmn_rcpt"/>
</dbReference>
<dbReference type="InterPro" id="IPR013088">
    <property type="entry name" value="Znf_NHR/GATA"/>
</dbReference>
<dbReference type="PANTHER" id="PTHR24082">
    <property type="entry name" value="NUCLEAR HORMONE RECEPTOR"/>
    <property type="match status" value="1"/>
</dbReference>
<dbReference type="PANTHER" id="PTHR24082:SF112">
    <property type="entry name" value="NUCLEAR RECEPTOR SUBFAMILY 1 GROUP D MEMBER 2"/>
    <property type="match status" value="1"/>
</dbReference>
<dbReference type="Pfam" id="PF00104">
    <property type="entry name" value="Hormone_recep"/>
    <property type="match status" value="1"/>
</dbReference>
<dbReference type="Pfam" id="PF00105">
    <property type="entry name" value="zf-C4"/>
    <property type="match status" value="1"/>
</dbReference>
<dbReference type="PRINTS" id="PR00398">
    <property type="entry name" value="STRDHORMONER"/>
</dbReference>
<dbReference type="PRINTS" id="PR00047">
    <property type="entry name" value="STROIDFINGER"/>
</dbReference>
<dbReference type="SMART" id="SM00430">
    <property type="entry name" value="HOLI"/>
    <property type="match status" value="1"/>
</dbReference>
<dbReference type="SMART" id="SM00399">
    <property type="entry name" value="ZnF_C4"/>
    <property type="match status" value="1"/>
</dbReference>
<dbReference type="SUPFAM" id="SSF57716">
    <property type="entry name" value="Glucocorticoid receptor-like (DNA-binding domain)"/>
    <property type="match status" value="1"/>
</dbReference>
<dbReference type="SUPFAM" id="SSF48508">
    <property type="entry name" value="Nuclear receptor ligand-binding domain"/>
    <property type="match status" value="1"/>
</dbReference>
<dbReference type="PROSITE" id="PS51843">
    <property type="entry name" value="NR_LBD"/>
    <property type="match status" value="1"/>
</dbReference>
<dbReference type="PROSITE" id="PS00031">
    <property type="entry name" value="NUCLEAR_REC_DBD_1"/>
    <property type="match status" value="1"/>
</dbReference>
<dbReference type="PROSITE" id="PS51030">
    <property type="entry name" value="NUCLEAR_REC_DBD_2"/>
    <property type="match status" value="1"/>
</dbReference>
<proteinExistence type="evidence at transcript level"/>
<keyword id="KW-0007">Acetylation</keyword>
<keyword id="KW-0010">Activator</keyword>
<keyword id="KW-0025">Alternative splicing</keyword>
<keyword id="KW-0090">Biological rhythms</keyword>
<keyword id="KW-0963">Cytoplasm</keyword>
<keyword id="KW-1015">Disulfide bond</keyword>
<keyword id="KW-0238">DNA-binding</keyword>
<keyword id="KW-0349">Heme</keyword>
<keyword id="KW-0408">Iron</keyword>
<keyword id="KW-0479">Metal-binding</keyword>
<keyword id="KW-0539">Nucleus</keyword>
<keyword id="KW-0597">Phosphoprotein</keyword>
<keyword id="KW-0675">Receptor</keyword>
<keyword id="KW-1185">Reference proteome</keyword>
<keyword id="KW-0678">Repressor</keyword>
<keyword id="KW-0804">Transcription</keyword>
<keyword id="KW-0805">Transcription regulation</keyword>
<keyword id="KW-0832">Ubl conjugation</keyword>
<keyword id="KW-0862">Zinc</keyword>
<keyword id="KW-0863">Zinc-finger</keyword>
<gene>
    <name evidence="8" type="primary">Nr1d2</name>
</gene>
<feature type="chain" id="PRO_0000053503" description="Nuclear receptor subfamily 1 group D member 2">
    <location>
        <begin position="1"/>
        <end position="578"/>
    </location>
</feature>
<feature type="domain" description="NR LBD" evidence="5">
    <location>
        <begin position="368"/>
        <end position="578"/>
    </location>
</feature>
<feature type="DNA-binding region" description="Nuclear receptor" evidence="4">
    <location>
        <begin position="100"/>
        <end position="176"/>
    </location>
</feature>
<feature type="zinc finger region" description="NR C4-type" evidence="4">
    <location>
        <begin position="103"/>
        <end position="123"/>
    </location>
</feature>
<feature type="zinc finger region" description="NR C4-type" evidence="4">
    <location>
        <begin position="140"/>
        <end position="164"/>
    </location>
</feature>
<feature type="region of interest" description="Modulating">
    <location>
        <begin position="1"/>
        <end position="99"/>
    </location>
</feature>
<feature type="region of interest" description="Required for phosphorylation by CSNK1E and cytoplasmic localization" evidence="3">
    <location>
        <begin position="1"/>
        <end position="60"/>
    </location>
</feature>
<feature type="region of interest" description="Disordered" evidence="6">
    <location>
        <begin position="13"/>
        <end position="89"/>
    </location>
</feature>
<feature type="region of interest" description="Disordered" evidence="6">
    <location>
        <begin position="214"/>
        <end position="247"/>
    </location>
</feature>
<feature type="region of interest" description="Interaction with ZNHIT1" evidence="1">
    <location>
        <begin position="396"/>
        <end position="578"/>
    </location>
</feature>
<feature type="compositionally biased region" description="Low complexity" evidence="6">
    <location>
        <begin position="13"/>
        <end position="47"/>
    </location>
</feature>
<feature type="compositionally biased region" description="Polar residues" evidence="6">
    <location>
        <begin position="48"/>
        <end position="61"/>
    </location>
</feature>
<feature type="compositionally biased region" description="Basic and acidic residues" evidence="6">
    <location>
        <begin position="227"/>
        <end position="237"/>
    </location>
</feature>
<feature type="binding site" evidence="1">
    <location>
        <position position="383"/>
    </location>
    <ligand>
        <name>heme</name>
        <dbReference type="ChEBI" id="CHEBI:30413"/>
    </ligand>
</feature>
<feature type="binding site" evidence="1">
    <location>
        <position position="567"/>
    </location>
    <ligand>
        <name>heme</name>
        <dbReference type="ChEBI" id="CHEBI:30413"/>
    </ligand>
</feature>
<feature type="modified residue" description="Phosphoserine; by GSK3-beta" evidence="1">
    <location>
        <position position="46"/>
    </location>
</feature>
<feature type="modified residue" description="N6-acetyllysine; by KAT5" evidence="2">
    <location>
        <position position="162"/>
    </location>
</feature>
<feature type="modified residue" description="N6-acetyllysine; by KAT5" evidence="2">
    <location>
        <position position="163"/>
    </location>
</feature>
<feature type="disulfide bond" evidence="1">
    <location>
        <begin position="336"/>
        <end position="342"/>
    </location>
</feature>
<feature type="disulfide bond" evidence="1">
    <location>
        <begin position="373"/>
        <end position="383"/>
    </location>
</feature>
<feature type="splice variant" id="VSP_003650" description="In isoform Rev-erb-beta-2." evidence="7">
    <original>C</original>
    <variation>Q</variation>
    <location>
        <position position="383"/>
    </location>
</feature>
<feature type="splice variant" id="VSP_003651" description="In isoform Rev-erb-beta-2." evidence="7">
    <location>
        <begin position="384"/>
        <end position="578"/>
    </location>
</feature>
<feature type="sequence conflict" description="In Ref. 2; AAA62508." evidence="7" ref="2">
    <original>S</original>
    <variation>R</variation>
    <location>
        <position position="46"/>
    </location>
</feature>
<name>NR1D2_RAT</name>
<evidence type="ECO:0000250" key="1"/>
<evidence type="ECO:0000250" key="2">
    <source>
        <dbReference type="UniProtKB" id="Q14995"/>
    </source>
</evidence>
<evidence type="ECO:0000250" key="3">
    <source>
        <dbReference type="UniProtKB" id="Q60674"/>
    </source>
</evidence>
<evidence type="ECO:0000255" key="4">
    <source>
        <dbReference type="PROSITE-ProRule" id="PRU00407"/>
    </source>
</evidence>
<evidence type="ECO:0000255" key="5">
    <source>
        <dbReference type="PROSITE-ProRule" id="PRU01189"/>
    </source>
</evidence>
<evidence type="ECO:0000256" key="6">
    <source>
        <dbReference type="SAM" id="MobiDB-lite"/>
    </source>
</evidence>
<evidence type="ECO:0000305" key="7"/>
<evidence type="ECO:0000312" key="8">
    <source>
        <dbReference type="RGD" id="628828"/>
    </source>
</evidence>
<comment type="function">
    <text evidence="3">Transcriptional repressor which coordinates circadian rhythm and metabolic pathways in a heme-dependent manner. Integral component of the complex transcription machinery that governs circadian rhythmicity and forms a critical negative limb of the circadian clock by directly repressing the expression of core clock components BMAL1 and CLOCK. Also regulates genes involved in metabolic functions, including lipid metabolism and the inflammatory response. Acts as a receptor for heme which stimulates its interaction with the NCOR1/HDAC3 corepressor complex, enhancing transcriptional repression. Recognizes two classes of DNA response elements within the promoter of its target genes and can bind to DNA as either monomers or homodimers, depending on the nature of the response element. Binds as a monomer to a response element composed of the consensus half-site motif 5'-[A/G]GGTCA-3' preceded by an A/T-rich 5' sequence (RevRE), or as a homodimer to a direct repeat of the core motif spaced by two nuclegotides (RevDR-2). Acts as a potent competitive repressor of ROR alpha (RORA) function and also negatively regulates the expression of NR1D1. Regulates lipid and energy homeostasis in the skeletal muscle via repression of genes involved in lipid metabolism and myogenesis including: CD36, FABP3, FABP4, UCP3, SCD1 and MSTN. Regulates hepatic lipid metabolism via the repression of APOC3. Represses gene expression at a distance in macrophages by inhibiting the transcription of enhancer-derived RNAs (eRNAs). In addition to its activity as a repressor, can also act as a transcriptional activator. Acts as a transcriptional activator of the sterol regulatory element-binding protein 1 (SREBF1) and the inflammatory mediator interleukin-6 (IL6) in the skeletal muscle (By similarity). Plays a role in the regulation of circadian sleep/wake cycle; essential for maintaining wakefulness during the dark phase or active period (By similarity). Key regulator of skeletal muscle mitochondrial function; negatively regulates the skeletal muscle expression of core clock genes and genes involved in mitochondrial biogenesis, fatty acid beta-oxidation and lipid metabolism (By similarity). May play a role in the circadian control of neutrophilic inflammation in the lung (By similarity).</text>
</comment>
<comment type="activity regulation">
    <text evidence="1">The heme-bound form can bind gaseous signaling molecules such as CO and nitric oxide (NO) and NO can reverse its transcriptional repressor activity.</text>
</comment>
<comment type="subunit">
    <text evidence="2">Binds DNA as a monomer or a homodimer (By similarity). Interacts with NCOA5 coactivator, leading to a strong increase of transcription of target genes (By similarity). Interacts (via N-terminus) with KAT5 (By similarity). Interacts (via C-terminus) with HDAC1 (By similarity). Interacts with ZNHIT1 (By similarity). Interacts with SIAH2 (By similarity).</text>
</comment>
<comment type="subcellular location">
    <subcellularLocation>
        <location evidence="4">Nucleus</location>
    </subcellularLocation>
    <subcellularLocation>
        <location evidence="3">Cytoplasm</location>
    </subcellularLocation>
    <text evidence="3">Phosphorylation by CSNK1E enhances its cytoplasmic localization.</text>
</comment>
<comment type="alternative products">
    <event type="alternative splicing"/>
    <isoform>
        <id>Q63504-1</id>
        <name>Rev-erb-beta-1</name>
        <sequence type="displayed"/>
    </isoform>
    <isoform>
        <id>Q63504-2</id>
        <name>Rev-erb-beta-2</name>
        <sequence type="described" ref="VSP_003650 VSP_003651"/>
    </isoform>
</comment>
<comment type="domain">
    <text>Composed of three domains: a modulating N-terminal domain, a DNA-binding domain and a C-terminal ligand-binding domain.</text>
</comment>
<comment type="PTM">
    <text evidence="2">Deacetylated by HDAC1 (By similarity). Acetylation and deacetylation regulate its transcriptional regulatory activity (By similarity).</text>
</comment>
<comment type="PTM">
    <text evidence="2">Under more reducing intracellular redox conditions, Cys-383 is in its heme-bound state, which is optimal for recruitment of the NCOR1/HDAC3 corepressor complex and repression of target genes (By similarity). When subjected to oxidative stress conditions, Cys-383 undergoes oxidation to form a disulfide bridge with Cys-373, also triggering a ligand switch that results in release of bound heme and derepression of target genes (By similarity).</text>
</comment>
<comment type="PTM">
    <text evidence="2">Ubiquitinated by SIAH2; leading to its proteasomal degradation.</text>
</comment>
<comment type="PTM">
    <text evidence="3">Phosphorylated by CSNK1E; phosphorylation enhances its cytoplasmic localization.</text>
</comment>
<comment type="similarity">
    <text evidence="7">Belongs to the nuclear hormone receptor family. NR1 subfamily.</text>
</comment>
<sequence>MELNAGGVIAYISSSSSASSPASCHSEGSENSFQSSSSSVPSSPNSSNCDANGNPKNTDVSSIDGVLKSDRTDCPVKTGKPGAPGMTKSHSGMTKFSGMVLLCKVCGDVASGFHYGVHACEGCKGFFRRSIQQNIQYKKCLKNENCSIMRMNRNRCQQCRFKKCLSVGMSRDAVRFGRIPKREKQRMLIEMQSAMKTMMSTQFGGHLQSDTLAEPHEQSVPPAQEQLRPKPQLEQENIKSTPPPSDFAKEEVIGMVTRAHKDTFLYNQEHRENSSESMPPHRGERIPRNVEQYNLNHDHRGGGLHSHFPCSESQQHLSGQYKGRNMMHYPNGHTVCISNGHCVNFSSAYPQRVCDRIPVGGCSQTESRNSYLCSTGGRMHLVCPMSKSPYVDPQKSGHEIWEEFSMSFTPAVKEVVEFAKRIPGFRDLSQHDQVNLLKAGTFEVLMVRFASLFDAKERTVTFLSGKKYSVDDLHSMGAGDLLSSMFEFSEKLNGLQLSDEEMSLFTAVVLVSADRSGIENVNSVEALQETLIRALRTLIMKNHPNEASIFTKLLLKLPDLRSLNNMHSEELLAFKVHP</sequence>
<protein>
    <recommendedName>
        <fullName evidence="7">Nuclear receptor subfamily 1 group D member 2</fullName>
    </recommendedName>
    <alternativeName>
        <fullName>EAR4</fullName>
    </alternativeName>
    <alternativeName>
        <fullName>Rev-erb-beta</fullName>
    </alternativeName>
</protein>
<accession>Q63504</accession>
<accession>Q62756</accession>
<accession>Q63542</accession>
<organism>
    <name type="scientific">Rattus norvegicus</name>
    <name type="common">Rat</name>
    <dbReference type="NCBI Taxonomy" id="10116"/>
    <lineage>
        <taxon>Eukaryota</taxon>
        <taxon>Metazoa</taxon>
        <taxon>Chordata</taxon>
        <taxon>Craniata</taxon>
        <taxon>Vertebrata</taxon>
        <taxon>Euteleostomi</taxon>
        <taxon>Mammalia</taxon>
        <taxon>Eutheria</taxon>
        <taxon>Euarchontoglires</taxon>
        <taxon>Glires</taxon>
        <taxon>Rodentia</taxon>
        <taxon>Myomorpha</taxon>
        <taxon>Muroidea</taxon>
        <taxon>Muridae</taxon>
        <taxon>Murinae</taxon>
        <taxon>Rattus</taxon>
    </lineage>
</organism>